<comment type="function">
    <text evidence="1">Transcriptional regulator that represses the expression of the lsr operon in the absence of the quorum-sensing signaling molecule autoinducer 2 (AI-2) (By similarity). It also represses the expression of the lsrRK operon (By similarity). Acts by binding directly to the lsrA and lsrR promoter regions (By similarity). In the presence of phosphorylated autoinducer-2 (phospho-AI-2), LsrR is inactivated, leading to the transcription of the genes (By similarity).</text>
</comment>
<comment type="activity regulation">
    <text evidence="1">Inactivated by phosphorylated autoinducer-2 (phospho-AI-2) (By similarity). Phospho-AI-2 acts by binding to LsrR, which is then unable to bind to the promoter regions, allowing the transcription of the target genes (By similarity).</text>
</comment>
<comment type="subcellular location">
    <subcellularLocation>
        <location evidence="2">Cytoplasm</location>
    </subcellularLocation>
</comment>
<comment type="similarity">
    <text evidence="2">Belongs to the SorC transcriptional regulatory family.</text>
</comment>
<accession>A8A065</accession>
<proteinExistence type="inferred from homology"/>
<evidence type="ECO:0000250" key="1">
    <source>
        <dbReference type="UniProtKB" id="P76141"/>
    </source>
</evidence>
<evidence type="ECO:0000305" key="2"/>
<organism>
    <name type="scientific">Escherichia coli O9:H4 (strain HS)</name>
    <dbReference type="NCBI Taxonomy" id="331112"/>
    <lineage>
        <taxon>Bacteria</taxon>
        <taxon>Pseudomonadati</taxon>
        <taxon>Pseudomonadota</taxon>
        <taxon>Gammaproteobacteria</taxon>
        <taxon>Enterobacterales</taxon>
        <taxon>Enterobacteriaceae</taxon>
        <taxon>Escherichia</taxon>
    </lineage>
</organism>
<keyword id="KW-0963">Cytoplasm</keyword>
<keyword id="KW-0238">DNA-binding</keyword>
<keyword id="KW-0678">Repressor</keyword>
<keyword id="KW-0804">Transcription</keyword>
<keyword id="KW-0805">Transcription regulation</keyword>
<reference key="1">
    <citation type="journal article" date="2008" name="J. Bacteriol.">
        <title>The pangenome structure of Escherichia coli: comparative genomic analysis of E. coli commensal and pathogenic isolates.</title>
        <authorList>
            <person name="Rasko D.A."/>
            <person name="Rosovitz M.J."/>
            <person name="Myers G.S.A."/>
            <person name="Mongodin E.F."/>
            <person name="Fricke W.F."/>
            <person name="Gajer P."/>
            <person name="Crabtree J."/>
            <person name="Sebaihia M."/>
            <person name="Thomson N.R."/>
            <person name="Chaudhuri R."/>
            <person name="Henderson I.R."/>
            <person name="Sperandio V."/>
            <person name="Ravel J."/>
        </authorList>
    </citation>
    <scope>NUCLEOTIDE SEQUENCE [LARGE SCALE GENOMIC DNA]</scope>
    <source>
        <strain>HS</strain>
    </source>
</reference>
<name>LSRR_ECOHS</name>
<dbReference type="EMBL" id="CP000802">
    <property type="protein sequence ID" value="ABV05919.1"/>
    <property type="molecule type" value="Genomic_DNA"/>
</dbReference>
<dbReference type="RefSeq" id="WP_000154352.1">
    <property type="nucleotide sequence ID" value="NC_009800.1"/>
</dbReference>
<dbReference type="SMR" id="A8A065"/>
<dbReference type="KEGG" id="ecx:EcHS_A1594"/>
<dbReference type="HOGENOM" id="CLU_054506_0_1_6"/>
<dbReference type="GO" id="GO:0005737">
    <property type="term" value="C:cytoplasm"/>
    <property type="evidence" value="ECO:0007669"/>
    <property type="project" value="UniProtKB-SubCell"/>
</dbReference>
<dbReference type="GO" id="GO:0030246">
    <property type="term" value="F:carbohydrate binding"/>
    <property type="evidence" value="ECO:0007669"/>
    <property type="project" value="InterPro"/>
</dbReference>
<dbReference type="GO" id="GO:0003677">
    <property type="term" value="F:DNA binding"/>
    <property type="evidence" value="ECO:0007669"/>
    <property type="project" value="UniProtKB-KW"/>
</dbReference>
<dbReference type="FunFam" id="1.10.10.10:FF:000195">
    <property type="entry name" value="LsrR family transcriptional regulator"/>
    <property type="match status" value="1"/>
</dbReference>
<dbReference type="FunFam" id="3.40.50.1360:FF:000012">
    <property type="entry name" value="LsrR family transcriptional regulator"/>
    <property type="match status" value="1"/>
</dbReference>
<dbReference type="Gene3D" id="3.40.50.1360">
    <property type="match status" value="1"/>
</dbReference>
<dbReference type="Gene3D" id="1.10.10.10">
    <property type="entry name" value="Winged helix-like DNA-binding domain superfamily/Winged helix DNA-binding domain"/>
    <property type="match status" value="1"/>
</dbReference>
<dbReference type="InterPro" id="IPR037171">
    <property type="entry name" value="NagB/RpiA_transferase-like"/>
</dbReference>
<dbReference type="InterPro" id="IPR051054">
    <property type="entry name" value="SorC_transcr_regulators"/>
</dbReference>
<dbReference type="InterPro" id="IPR007324">
    <property type="entry name" value="Sugar-bd_dom_put"/>
</dbReference>
<dbReference type="InterPro" id="IPR036388">
    <property type="entry name" value="WH-like_DNA-bd_sf"/>
</dbReference>
<dbReference type="NCBIfam" id="NF011947">
    <property type="entry name" value="PRK15418.1"/>
    <property type="match status" value="1"/>
</dbReference>
<dbReference type="PANTHER" id="PTHR34294:SF1">
    <property type="entry name" value="TRANSCRIPTIONAL REGULATOR LSRR"/>
    <property type="match status" value="1"/>
</dbReference>
<dbReference type="PANTHER" id="PTHR34294">
    <property type="entry name" value="TRANSCRIPTIONAL REGULATOR-RELATED"/>
    <property type="match status" value="1"/>
</dbReference>
<dbReference type="Pfam" id="PF04198">
    <property type="entry name" value="Sugar-bind"/>
    <property type="match status" value="1"/>
</dbReference>
<dbReference type="SUPFAM" id="SSF100950">
    <property type="entry name" value="NagB/RpiA/CoA transferase-like"/>
    <property type="match status" value="1"/>
</dbReference>
<feature type="chain" id="PRO_0000351616" description="Transcriptional regulator LsrR">
    <location>
        <begin position="1"/>
        <end position="317"/>
    </location>
</feature>
<feature type="DNA-binding region" description="H-T-H motif" evidence="2">
    <location>
        <begin position="33"/>
        <end position="56"/>
    </location>
</feature>
<protein>
    <recommendedName>
        <fullName evidence="1">Transcriptional regulator LsrR</fullName>
    </recommendedName>
</protein>
<gene>
    <name type="primary">lsrR</name>
    <name type="ordered locus">EcHS_A1594</name>
</gene>
<sequence>MTINDSVISEQGMCEEEQVARIAWFYYHDGLTQSEISDRLGLTRLKVSRLLEKGHQSGIIRVQINSRFEGCLEYETQLRRQFSLQHVRVIPGLADADVGGRLGIGAAHMLMSLLQPQQMLAIGFGEATMNTLQRLSGFISSQQIRLVTLSGGVGSYMTGIGQLNAACSVNIIPAPLRASSADIARTLKNENCVKDVLLAAQAADVAIVGIGAVSQQDDATIIRSGYISQGEQLMIGRKGAVGDILGYFFDAKGDVVTDIKIHNELIGLPLSALKTIPVRVGVAGGENKAEAIAAAMKGGYINALVTDQDTAAAILRS</sequence>